<keyword id="KW-1003">Cell membrane</keyword>
<keyword id="KW-0169">Cobalamin biosynthesis</keyword>
<keyword id="KW-0170">Cobalt</keyword>
<keyword id="KW-0171">Cobalt transport</keyword>
<keyword id="KW-0406">Ion transport</keyword>
<keyword id="KW-0472">Membrane</keyword>
<keyword id="KW-0732">Signal</keyword>
<keyword id="KW-0812">Transmembrane</keyword>
<keyword id="KW-1133">Transmembrane helix</keyword>
<keyword id="KW-0813">Transport</keyword>
<protein>
    <recommendedName>
        <fullName evidence="1">Cobalt transport protein CbiM</fullName>
    </recommendedName>
    <alternativeName>
        <fullName evidence="1">Energy-coupling factor transporter probable substrate-capture protein CbiM</fullName>
        <shortName evidence="1">ECF transporter S component CbiM</shortName>
    </alternativeName>
</protein>
<proteinExistence type="inferred from homology"/>
<reference key="1">
    <citation type="submission" date="2007-04" db="EMBL/GenBank/DDBJ databases">
        <title>Complete sequence of Roseiflexus sp. RS-1.</title>
        <authorList>
            <consortium name="US DOE Joint Genome Institute"/>
            <person name="Copeland A."/>
            <person name="Lucas S."/>
            <person name="Lapidus A."/>
            <person name="Barry K."/>
            <person name="Detter J.C."/>
            <person name="Glavina del Rio T."/>
            <person name="Hammon N."/>
            <person name="Israni S."/>
            <person name="Dalin E."/>
            <person name="Tice H."/>
            <person name="Pitluck S."/>
            <person name="Chertkov O."/>
            <person name="Brettin T."/>
            <person name="Bruce D."/>
            <person name="Han C."/>
            <person name="Schmutz J."/>
            <person name="Larimer F."/>
            <person name="Land M."/>
            <person name="Hauser L."/>
            <person name="Kyrpides N."/>
            <person name="Mikhailova N."/>
            <person name="Bryant D.A."/>
            <person name="Richardson P."/>
        </authorList>
    </citation>
    <scope>NUCLEOTIDE SEQUENCE [LARGE SCALE GENOMIC DNA]</scope>
    <source>
        <strain>RS-1</strain>
    </source>
</reference>
<sequence>MKPLHRWLPVVIGAALLIIFESRAAYAMHIMEGFLPPVWAGFWFIVVLPFWVLGLRRINRLIAGKPETRLLLGFAAAFAFVLSALKIPSVTGSSSHPTGTGLGTILFGPLVMSVLGSIVLLFQALLIAHGGLTTLGANAFSMAVVGPFVAWLIWKGLKDRAPIWLTVFLAAALADLFTYVVTSAQLALAYPDAVGGFAASFARFGAIFAVTQIPLAISEGILTVLIFNALQANAQTELQSLGVLKGAQA</sequence>
<comment type="function">
    <text evidence="1">Part of the energy-coupling factor (ECF) transporter complex CbiMNOQ involved in cobalt import.</text>
</comment>
<comment type="pathway">
    <text evidence="1">Cofactor biosynthesis; adenosylcobalamin biosynthesis.</text>
</comment>
<comment type="subunit">
    <text evidence="1">Forms an energy-coupling factor (ECF) transporter complex composed of an ATP-binding protein (A component, CbiO), a transmembrane protein (T component, CbiQ) and 2 possible substrate-capture proteins (S components, CbiM and CbiN) of unknown stoichimetry.</text>
</comment>
<comment type="subcellular location">
    <subcellularLocation>
        <location evidence="1">Cell membrane</location>
        <topology evidence="1">Multi-pass membrane protein</topology>
    </subcellularLocation>
</comment>
<comment type="similarity">
    <text evidence="1">Belongs to the CbiM family.</text>
</comment>
<gene>
    <name evidence="1" type="primary">cbiM</name>
    <name type="ordered locus">RoseRS_0560</name>
</gene>
<feature type="signal peptide" evidence="1">
    <location>
        <begin position="1"/>
        <end position="27"/>
    </location>
</feature>
<feature type="chain" id="PRO_5000249837" description="Cobalt transport protein CbiM">
    <location>
        <begin position="28"/>
        <end position="249"/>
    </location>
</feature>
<feature type="transmembrane region" description="Helical" evidence="1">
    <location>
        <begin position="33"/>
        <end position="53"/>
    </location>
</feature>
<feature type="transmembrane region" description="Helical" evidence="1">
    <location>
        <begin position="70"/>
        <end position="90"/>
    </location>
</feature>
<feature type="transmembrane region" description="Helical" evidence="1">
    <location>
        <begin position="102"/>
        <end position="122"/>
    </location>
</feature>
<feature type="transmembrane region" description="Helical" evidence="1">
    <location>
        <begin position="134"/>
        <end position="154"/>
    </location>
</feature>
<feature type="transmembrane region" description="Helical" evidence="1">
    <location>
        <begin position="161"/>
        <end position="181"/>
    </location>
</feature>
<feature type="transmembrane region" description="Helical" evidence="1">
    <location>
        <begin position="207"/>
        <end position="227"/>
    </location>
</feature>
<organism>
    <name type="scientific">Roseiflexus sp. (strain RS-1)</name>
    <dbReference type="NCBI Taxonomy" id="357808"/>
    <lineage>
        <taxon>Bacteria</taxon>
        <taxon>Bacillati</taxon>
        <taxon>Chloroflexota</taxon>
        <taxon>Chloroflexia</taxon>
        <taxon>Chloroflexales</taxon>
        <taxon>Roseiflexineae</taxon>
        <taxon>Roseiflexaceae</taxon>
        <taxon>Roseiflexus</taxon>
    </lineage>
</organism>
<dbReference type="EMBL" id="CP000686">
    <property type="protein sequence ID" value="ABQ88982.1"/>
    <property type="molecule type" value="Genomic_DNA"/>
</dbReference>
<dbReference type="RefSeq" id="WP_011955338.1">
    <property type="nucleotide sequence ID" value="NC_009523.1"/>
</dbReference>
<dbReference type="SMR" id="A5UQS9"/>
<dbReference type="STRING" id="357808.RoseRS_0560"/>
<dbReference type="KEGG" id="rrs:RoseRS_0560"/>
<dbReference type="eggNOG" id="COG0310">
    <property type="taxonomic scope" value="Bacteria"/>
</dbReference>
<dbReference type="HOGENOM" id="CLU_052508_3_0_0"/>
<dbReference type="OrthoDB" id="9809846at2"/>
<dbReference type="UniPathway" id="UPA00148"/>
<dbReference type="Proteomes" id="UP000006554">
    <property type="component" value="Chromosome"/>
</dbReference>
<dbReference type="GO" id="GO:0043190">
    <property type="term" value="C:ATP-binding cassette (ABC) transporter complex"/>
    <property type="evidence" value="ECO:0007669"/>
    <property type="project" value="InterPro"/>
</dbReference>
<dbReference type="GO" id="GO:0015087">
    <property type="term" value="F:cobalt ion transmembrane transporter activity"/>
    <property type="evidence" value="ECO:0007669"/>
    <property type="project" value="UniProtKB-UniRule"/>
</dbReference>
<dbReference type="GO" id="GO:0009236">
    <property type="term" value="P:cobalamin biosynthetic process"/>
    <property type="evidence" value="ECO:0007669"/>
    <property type="project" value="UniProtKB-UniRule"/>
</dbReference>
<dbReference type="FunFam" id="1.10.1760.20:FF:000001">
    <property type="entry name" value="Cobalt transport protein CbiM"/>
    <property type="match status" value="1"/>
</dbReference>
<dbReference type="Gene3D" id="1.10.1760.20">
    <property type="match status" value="1"/>
</dbReference>
<dbReference type="HAMAP" id="MF_01462">
    <property type="entry name" value="CbiM"/>
    <property type="match status" value="1"/>
</dbReference>
<dbReference type="InterPro" id="IPR018024">
    <property type="entry name" value="CbiM"/>
</dbReference>
<dbReference type="InterPro" id="IPR002751">
    <property type="entry name" value="CbiM/NikMN"/>
</dbReference>
<dbReference type="NCBIfam" id="TIGR00123">
    <property type="entry name" value="cbiM"/>
    <property type="match status" value="1"/>
</dbReference>
<dbReference type="NCBIfam" id="NF006184">
    <property type="entry name" value="PRK08319.1"/>
    <property type="match status" value="1"/>
</dbReference>
<dbReference type="PANTHER" id="PTHR43627">
    <property type="match status" value="1"/>
</dbReference>
<dbReference type="PANTHER" id="PTHR43627:SF1">
    <property type="entry name" value="COBALT TRANSPORT PROTEIN CBIM"/>
    <property type="match status" value="1"/>
</dbReference>
<dbReference type="Pfam" id="PF01891">
    <property type="entry name" value="CbiM"/>
    <property type="match status" value="1"/>
</dbReference>
<name>CBIM_ROSS1</name>
<accession>A5UQS9</accession>
<evidence type="ECO:0000255" key="1">
    <source>
        <dbReference type="HAMAP-Rule" id="MF_01462"/>
    </source>
</evidence>